<evidence type="ECO:0000255" key="1">
    <source>
        <dbReference type="HAMAP-Rule" id="MF_00500"/>
    </source>
</evidence>
<evidence type="ECO:0000256" key="2">
    <source>
        <dbReference type="SAM" id="MobiDB-lite"/>
    </source>
</evidence>
<evidence type="ECO:0000305" key="3"/>
<dbReference type="EMBL" id="CP001598">
    <property type="protein sequence ID" value="ACQ48016.1"/>
    <property type="molecule type" value="Genomic_DNA"/>
</dbReference>
<dbReference type="RefSeq" id="WP_001274011.1">
    <property type="nucleotide sequence ID" value="NC_012659.1"/>
</dbReference>
<dbReference type="SMR" id="C3P8M8"/>
<dbReference type="GeneID" id="93006778"/>
<dbReference type="KEGG" id="bai:BAA_4566"/>
<dbReference type="HOGENOM" id="CLU_160655_1_0_9"/>
<dbReference type="GO" id="GO:0005829">
    <property type="term" value="C:cytosol"/>
    <property type="evidence" value="ECO:0007669"/>
    <property type="project" value="TreeGrafter"/>
</dbReference>
<dbReference type="GO" id="GO:0015935">
    <property type="term" value="C:small ribosomal subunit"/>
    <property type="evidence" value="ECO:0007669"/>
    <property type="project" value="TreeGrafter"/>
</dbReference>
<dbReference type="GO" id="GO:0070181">
    <property type="term" value="F:small ribosomal subunit rRNA binding"/>
    <property type="evidence" value="ECO:0007669"/>
    <property type="project" value="TreeGrafter"/>
</dbReference>
<dbReference type="GO" id="GO:0003735">
    <property type="term" value="F:structural constituent of ribosome"/>
    <property type="evidence" value="ECO:0007669"/>
    <property type="project" value="InterPro"/>
</dbReference>
<dbReference type="GO" id="GO:0006412">
    <property type="term" value="P:translation"/>
    <property type="evidence" value="ECO:0007669"/>
    <property type="project" value="UniProtKB-UniRule"/>
</dbReference>
<dbReference type="FunFam" id="1.20.58.110:FF:000001">
    <property type="entry name" value="30S ribosomal protein S20"/>
    <property type="match status" value="1"/>
</dbReference>
<dbReference type="Gene3D" id="1.20.58.110">
    <property type="entry name" value="Ribosomal protein S20"/>
    <property type="match status" value="1"/>
</dbReference>
<dbReference type="HAMAP" id="MF_00500">
    <property type="entry name" value="Ribosomal_bS20"/>
    <property type="match status" value="1"/>
</dbReference>
<dbReference type="InterPro" id="IPR002583">
    <property type="entry name" value="Ribosomal_bS20"/>
</dbReference>
<dbReference type="InterPro" id="IPR036510">
    <property type="entry name" value="Ribosomal_bS20_sf"/>
</dbReference>
<dbReference type="NCBIfam" id="TIGR00029">
    <property type="entry name" value="S20"/>
    <property type="match status" value="1"/>
</dbReference>
<dbReference type="PANTHER" id="PTHR33398">
    <property type="entry name" value="30S RIBOSOMAL PROTEIN S20"/>
    <property type="match status" value="1"/>
</dbReference>
<dbReference type="PANTHER" id="PTHR33398:SF1">
    <property type="entry name" value="SMALL RIBOSOMAL SUBUNIT PROTEIN BS20C"/>
    <property type="match status" value="1"/>
</dbReference>
<dbReference type="Pfam" id="PF01649">
    <property type="entry name" value="Ribosomal_S20p"/>
    <property type="match status" value="1"/>
</dbReference>
<dbReference type="SUPFAM" id="SSF46992">
    <property type="entry name" value="Ribosomal protein S20"/>
    <property type="match status" value="1"/>
</dbReference>
<keyword id="KW-0687">Ribonucleoprotein</keyword>
<keyword id="KW-0689">Ribosomal protein</keyword>
<keyword id="KW-0694">RNA-binding</keyword>
<keyword id="KW-0699">rRNA-binding</keyword>
<feature type="chain" id="PRO_1000135770" description="Small ribosomal subunit protein bS20">
    <location>
        <begin position="1"/>
        <end position="85"/>
    </location>
</feature>
<feature type="region of interest" description="Disordered" evidence="2">
    <location>
        <begin position="1"/>
        <end position="25"/>
    </location>
</feature>
<organism>
    <name type="scientific">Bacillus anthracis (strain A0248)</name>
    <dbReference type="NCBI Taxonomy" id="592021"/>
    <lineage>
        <taxon>Bacteria</taxon>
        <taxon>Bacillati</taxon>
        <taxon>Bacillota</taxon>
        <taxon>Bacilli</taxon>
        <taxon>Bacillales</taxon>
        <taxon>Bacillaceae</taxon>
        <taxon>Bacillus</taxon>
        <taxon>Bacillus cereus group</taxon>
    </lineage>
</organism>
<reference key="1">
    <citation type="submission" date="2009-04" db="EMBL/GenBank/DDBJ databases">
        <title>Genome sequence of Bacillus anthracis A0248.</title>
        <authorList>
            <person name="Dodson R.J."/>
            <person name="Munk A.C."/>
            <person name="Bruce D."/>
            <person name="Detter C."/>
            <person name="Tapia R."/>
            <person name="Sutton G."/>
            <person name="Sims D."/>
            <person name="Brettin T."/>
        </authorList>
    </citation>
    <scope>NUCLEOTIDE SEQUENCE [LARGE SCALE GENOMIC DNA]</scope>
    <source>
        <strain>A0248</strain>
    </source>
</reference>
<accession>C3P8M8</accession>
<comment type="function">
    <text evidence="1">Binds directly to 16S ribosomal RNA.</text>
</comment>
<comment type="similarity">
    <text evidence="1">Belongs to the bacterial ribosomal protein bS20 family.</text>
</comment>
<sequence>MANIKSAIKRAKLSEERRAHNASIKSDMRSAVKTVEALVTNNDLENAKEAFKTASKKLDKAARKGLIHQNAAARQKSRLAKQVNA</sequence>
<gene>
    <name evidence="1" type="primary">rpsT</name>
    <name type="ordered locus">BAA_4566</name>
</gene>
<proteinExistence type="inferred from homology"/>
<name>RS20_BACAA</name>
<protein>
    <recommendedName>
        <fullName evidence="1">Small ribosomal subunit protein bS20</fullName>
    </recommendedName>
    <alternativeName>
        <fullName evidence="3">30S ribosomal protein S20</fullName>
    </alternativeName>
</protein>